<comment type="function">
    <text evidence="1">Produces ATP from ADP in the presence of a proton gradient across the membrane. The gamma chain is believed to be important in regulating ATPase activity and the flow of protons through the CF(0) complex.</text>
</comment>
<comment type="subunit">
    <text evidence="1">F-type ATPases have 2 components, CF(1) - the catalytic core - and CF(0) - the membrane proton channel. CF(1) has five subunits: alpha(3), beta(3), gamma(1), delta(1), epsilon(1). CF(0) has three main subunits: a, b and c.</text>
</comment>
<comment type="subcellular location">
    <subcellularLocation>
        <location evidence="1">Cell inner membrane</location>
        <topology evidence="1">Peripheral membrane protein</topology>
    </subcellularLocation>
</comment>
<comment type="similarity">
    <text evidence="1">Belongs to the ATPase gamma chain family.</text>
</comment>
<sequence>MATLKELKQKISSVKNTQKTTRAMKLVSTAKLKRAEEAIMRSREYARKIDEVMHEISAKLASVKDSIELRAFAKIENVEKVDVIVITADKGLCGGFNIQTIKQTIKLIEELKEKKVKIRLKVIGKKAIEYFKFVGIDMYEEVIGLSAAPNYEKAAELIQKSYEDFVNEEIDNIITIHNGYVNKLTQQVYVKELLPIEVDVNDSQEFLEVEPDNDYETILETLVKKYIEYSLYYALLDSLAAEHSARMQAMDAATNNAKEMVHQLTLEFNKARQEAVTRELIEIVTAIEAMKK</sequence>
<protein>
    <recommendedName>
        <fullName evidence="1">ATP synthase gamma chain</fullName>
    </recommendedName>
    <alternativeName>
        <fullName evidence="1">ATP synthase F1 sector gamma subunit</fullName>
    </alternativeName>
    <alternativeName>
        <fullName evidence="1">F-ATPase gamma subunit</fullName>
    </alternativeName>
</protein>
<evidence type="ECO:0000255" key="1">
    <source>
        <dbReference type="HAMAP-Rule" id="MF_00815"/>
    </source>
</evidence>
<dbReference type="EMBL" id="CP001279">
    <property type="protein sequence ID" value="ACM92249.1"/>
    <property type="molecule type" value="Genomic_DNA"/>
</dbReference>
<dbReference type="RefSeq" id="WP_012663621.1">
    <property type="nucleotide sequence ID" value="NC_012115.1"/>
</dbReference>
<dbReference type="SMR" id="B9L7Y6"/>
<dbReference type="STRING" id="598659.NAMH_0321"/>
<dbReference type="KEGG" id="nam:NAMH_0321"/>
<dbReference type="eggNOG" id="COG0224">
    <property type="taxonomic scope" value="Bacteria"/>
</dbReference>
<dbReference type="HOGENOM" id="CLU_050669_0_1_7"/>
<dbReference type="OrthoDB" id="9812769at2"/>
<dbReference type="Proteomes" id="UP000000448">
    <property type="component" value="Chromosome"/>
</dbReference>
<dbReference type="GO" id="GO:0005886">
    <property type="term" value="C:plasma membrane"/>
    <property type="evidence" value="ECO:0007669"/>
    <property type="project" value="UniProtKB-SubCell"/>
</dbReference>
<dbReference type="GO" id="GO:0045259">
    <property type="term" value="C:proton-transporting ATP synthase complex"/>
    <property type="evidence" value="ECO:0007669"/>
    <property type="project" value="UniProtKB-KW"/>
</dbReference>
<dbReference type="GO" id="GO:0005524">
    <property type="term" value="F:ATP binding"/>
    <property type="evidence" value="ECO:0007669"/>
    <property type="project" value="UniProtKB-UniRule"/>
</dbReference>
<dbReference type="GO" id="GO:0046933">
    <property type="term" value="F:proton-transporting ATP synthase activity, rotational mechanism"/>
    <property type="evidence" value="ECO:0007669"/>
    <property type="project" value="UniProtKB-UniRule"/>
</dbReference>
<dbReference type="GO" id="GO:0042777">
    <property type="term" value="P:proton motive force-driven plasma membrane ATP synthesis"/>
    <property type="evidence" value="ECO:0007669"/>
    <property type="project" value="UniProtKB-UniRule"/>
</dbReference>
<dbReference type="CDD" id="cd12151">
    <property type="entry name" value="F1-ATPase_gamma"/>
    <property type="match status" value="1"/>
</dbReference>
<dbReference type="FunFam" id="1.10.287.80:FF:000007">
    <property type="entry name" value="ATP synthase gamma chain"/>
    <property type="match status" value="1"/>
</dbReference>
<dbReference type="FunFam" id="3.40.1380.10:FF:000006">
    <property type="entry name" value="ATP synthase gamma chain"/>
    <property type="match status" value="1"/>
</dbReference>
<dbReference type="Gene3D" id="3.40.1380.10">
    <property type="match status" value="1"/>
</dbReference>
<dbReference type="Gene3D" id="1.10.287.80">
    <property type="entry name" value="ATP synthase, gamma subunit, helix hairpin domain"/>
    <property type="match status" value="1"/>
</dbReference>
<dbReference type="HAMAP" id="MF_00815">
    <property type="entry name" value="ATP_synth_gamma_bact"/>
    <property type="match status" value="1"/>
</dbReference>
<dbReference type="InterPro" id="IPR035968">
    <property type="entry name" value="ATP_synth_F1_ATPase_gsu"/>
</dbReference>
<dbReference type="InterPro" id="IPR000131">
    <property type="entry name" value="ATP_synth_F1_gsu"/>
</dbReference>
<dbReference type="NCBIfam" id="TIGR01146">
    <property type="entry name" value="ATPsyn_F1gamma"/>
    <property type="match status" value="1"/>
</dbReference>
<dbReference type="PANTHER" id="PTHR11693">
    <property type="entry name" value="ATP SYNTHASE GAMMA CHAIN"/>
    <property type="match status" value="1"/>
</dbReference>
<dbReference type="PANTHER" id="PTHR11693:SF22">
    <property type="entry name" value="ATP SYNTHASE SUBUNIT GAMMA, MITOCHONDRIAL"/>
    <property type="match status" value="1"/>
</dbReference>
<dbReference type="Pfam" id="PF00231">
    <property type="entry name" value="ATP-synt"/>
    <property type="match status" value="1"/>
</dbReference>
<dbReference type="PRINTS" id="PR00126">
    <property type="entry name" value="ATPASEGAMMA"/>
</dbReference>
<dbReference type="SUPFAM" id="SSF52943">
    <property type="entry name" value="ATP synthase (F1-ATPase), gamma subunit"/>
    <property type="match status" value="1"/>
</dbReference>
<organism>
    <name type="scientific">Nautilia profundicola (strain ATCC BAA-1463 / DSM 18972 / AmH)</name>
    <dbReference type="NCBI Taxonomy" id="598659"/>
    <lineage>
        <taxon>Bacteria</taxon>
        <taxon>Pseudomonadati</taxon>
        <taxon>Campylobacterota</taxon>
        <taxon>Epsilonproteobacteria</taxon>
        <taxon>Nautiliales</taxon>
        <taxon>Nautiliaceae</taxon>
        <taxon>Nautilia</taxon>
    </lineage>
</organism>
<name>ATPG_NAUPA</name>
<feature type="chain" id="PRO_1000148630" description="ATP synthase gamma chain">
    <location>
        <begin position="1"/>
        <end position="292"/>
    </location>
</feature>
<proteinExistence type="inferred from homology"/>
<gene>
    <name evidence="1" type="primary">atpG</name>
    <name type="ordered locus">NAMH_0321</name>
</gene>
<reference key="1">
    <citation type="journal article" date="2009" name="PLoS Genet.">
        <title>Adaptations to submarine hydrothermal environments exemplified by the genome of Nautilia profundicola.</title>
        <authorList>
            <person name="Campbell B.J."/>
            <person name="Smith J.L."/>
            <person name="Hanson T.E."/>
            <person name="Klotz M.G."/>
            <person name="Stein L.Y."/>
            <person name="Lee C.K."/>
            <person name="Wu D."/>
            <person name="Robinson J.M."/>
            <person name="Khouri H.M."/>
            <person name="Eisen J.A."/>
            <person name="Cary S.C."/>
        </authorList>
    </citation>
    <scope>NUCLEOTIDE SEQUENCE [LARGE SCALE GENOMIC DNA]</scope>
    <source>
        <strain>ATCC BAA-1463 / DSM 18972 / AmH</strain>
    </source>
</reference>
<accession>B9L7Y6</accession>
<keyword id="KW-0066">ATP synthesis</keyword>
<keyword id="KW-0997">Cell inner membrane</keyword>
<keyword id="KW-1003">Cell membrane</keyword>
<keyword id="KW-0139">CF(1)</keyword>
<keyword id="KW-0375">Hydrogen ion transport</keyword>
<keyword id="KW-0406">Ion transport</keyword>
<keyword id="KW-0472">Membrane</keyword>
<keyword id="KW-0813">Transport</keyword>